<reference key="1">
    <citation type="journal article" date="1992" name="Eur. J. Biochem.">
        <title>The primary structure of the antenna polypeptides of Ectothiorhodospira halochloris and Ectothiorhodospira halophila. Four core-type antenna polypeptides in E. halochloris and E. halophila.</title>
        <authorList>
            <person name="Wagner-Huber R."/>
            <person name="Brunisholz R.A."/>
            <person name="Bissig I."/>
            <person name="Frank G."/>
            <person name="Suter F."/>
            <person name="Zuber H."/>
        </authorList>
    </citation>
    <scope>PROTEIN SEQUENCE</scope>
</reference>
<accession>P80104</accession>
<proteinExistence type="evidence at protein level"/>
<feature type="chain" id="PRO_0000099810" description="Light-harvesting protein B800/850/890 beta-1 chain">
    <location>
        <begin position="1"/>
        <end position="53" status="greater than"/>
    </location>
</feature>
<feature type="topological domain" description="Cytoplasmic" evidence="1">
    <location>
        <begin position="1"/>
        <end position="19"/>
    </location>
</feature>
<feature type="transmembrane region" description="Helical" evidence="1">
    <location>
        <begin position="20"/>
        <end position="42"/>
    </location>
</feature>
<feature type="topological domain" description="Periplasmic" evidence="1">
    <location>
        <begin position="43"/>
        <end position="53" status="greater than"/>
    </location>
</feature>
<feature type="binding site" description="axial binding residue" evidence="1">
    <location>
        <position position="18"/>
    </location>
    <ligand>
        <name>a bacteriochlorophyll</name>
        <dbReference type="ChEBI" id="CHEBI:38201"/>
    </ligand>
    <ligandPart>
        <name>Mg</name>
        <dbReference type="ChEBI" id="CHEBI:25107"/>
    </ligandPart>
</feature>
<feature type="binding site" description="axial binding residue" evidence="1">
    <location>
        <position position="36"/>
    </location>
    <ligand>
        <name>a bacteriochlorophyll</name>
        <dbReference type="ChEBI" id="CHEBI:38201"/>
    </ligand>
    <ligandPart>
        <name>Mg</name>
        <dbReference type="ChEBI" id="CHEBI:25107"/>
    </ligandPart>
</feature>
<feature type="non-terminal residue">
    <location>
        <position position="53"/>
    </location>
</feature>
<evidence type="ECO:0000255" key="1"/>
<evidence type="ECO:0000305" key="2"/>
<name>LHB1_HALHL</name>
<organism>
    <name type="scientific">Halorhodospira halophila (strain DSM 244 / SL1)</name>
    <name type="common">Ectothiorhodospira halophila (strain DSM 244 / SL1)</name>
    <dbReference type="NCBI Taxonomy" id="349124"/>
    <lineage>
        <taxon>Bacteria</taxon>
        <taxon>Pseudomonadati</taxon>
        <taxon>Pseudomonadota</taxon>
        <taxon>Gammaproteobacteria</taxon>
        <taxon>Chromatiales</taxon>
        <taxon>Ectothiorhodospiraceae</taxon>
        <taxon>Halorhodospira</taxon>
    </lineage>
</organism>
<keyword id="KW-0042">Antenna complex</keyword>
<keyword id="KW-0076">Bacteriochlorophyll</keyword>
<keyword id="KW-0997">Cell inner membrane</keyword>
<keyword id="KW-1003">Cell membrane</keyword>
<keyword id="KW-0148">Chlorophyll</keyword>
<keyword id="KW-0157">Chromophore</keyword>
<keyword id="KW-0903">Direct protein sequencing</keyword>
<keyword id="KW-0437">Light-harvesting polypeptide</keyword>
<keyword id="KW-0460">Magnesium</keyword>
<keyword id="KW-0472">Membrane</keyword>
<keyword id="KW-0479">Metal-binding</keyword>
<keyword id="KW-0812">Transmembrane</keyword>
<keyword id="KW-1133">Transmembrane helix</keyword>
<sequence>ADNMSLTGLSDEEAKEFHSIFMQSFLIFTAVAVVAHFLAWAWRPWIPGAEGYG</sequence>
<dbReference type="PIR" id="S23292">
    <property type="entry name" value="S23292"/>
</dbReference>
<dbReference type="SMR" id="P80104"/>
<dbReference type="STRING" id="349124.Hhal_1411"/>
<dbReference type="eggNOG" id="ENOG50336HR">
    <property type="taxonomic scope" value="Bacteria"/>
</dbReference>
<dbReference type="GO" id="GO:0005886">
    <property type="term" value="C:plasma membrane"/>
    <property type="evidence" value="ECO:0007669"/>
    <property type="project" value="UniProtKB-SubCell"/>
</dbReference>
<dbReference type="GO" id="GO:0030077">
    <property type="term" value="C:plasma membrane light-harvesting complex"/>
    <property type="evidence" value="ECO:0007669"/>
    <property type="project" value="InterPro"/>
</dbReference>
<dbReference type="GO" id="GO:0042314">
    <property type="term" value="F:bacteriochlorophyll binding"/>
    <property type="evidence" value="ECO:0007669"/>
    <property type="project" value="UniProtKB-KW"/>
</dbReference>
<dbReference type="GO" id="GO:0045156">
    <property type="term" value="F:electron transporter, transferring electrons within the cyclic electron transport pathway of photosynthesis activity"/>
    <property type="evidence" value="ECO:0007669"/>
    <property type="project" value="InterPro"/>
</dbReference>
<dbReference type="GO" id="GO:0046872">
    <property type="term" value="F:metal ion binding"/>
    <property type="evidence" value="ECO:0007669"/>
    <property type="project" value="UniProtKB-KW"/>
</dbReference>
<dbReference type="GO" id="GO:0019684">
    <property type="term" value="P:photosynthesis, light reaction"/>
    <property type="evidence" value="ECO:0007669"/>
    <property type="project" value="InterPro"/>
</dbReference>
<dbReference type="Gene3D" id="1.20.5.250">
    <property type="match status" value="1"/>
</dbReference>
<dbReference type="InterPro" id="IPR000066">
    <property type="entry name" value="Antenna_a/b"/>
</dbReference>
<dbReference type="InterPro" id="IPR023623">
    <property type="entry name" value="Antenna_beta_CS"/>
</dbReference>
<dbReference type="InterPro" id="IPR023624">
    <property type="entry name" value="Antenna_beta_dom_sf"/>
</dbReference>
<dbReference type="InterPro" id="IPR002362">
    <property type="entry name" value="LHB-1/5"/>
</dbReference>
<dbReference type="InterPro" id="IPR035889">
    <property type="entry name" value="Light-harvesting_complex"/>
</dbReference>
<dbReference type="NCBIfam" id="NF040862">
    <property type="entry name" value="pufB_517_ASD"/>
    <property type="match status" value="1"/>
</dbReference>
<dbReference type="Pfam" id="PF00556">
    <property type="entry name" value="LHC"/>
    <property type="match status" value="1"/>
</dbReference>
<dbReference type="PIRSF" id="PIRSF002900">
    <property type="entry name" value="Antenna_beta"/>
    <property type="match status" value="1"/>
</dbReference>
<dbReference type="PRINTS" id="PR00674">
    <property type="entry name" value="LIGHTHARVSTB"/>
</dbReference>
<dbReference type="SUPFAM" id="SSF56918">
    <property type="entry name" value="Light-harvesting complex subunits"/>
    <property type="match status" value="1"/>
</dbReference>
<dbReference type="PROSITE" id="PS00969">
    <property type="entry name" value="ANTENNA_COMP_BETA"/>
    <property type="match status" value="1"/>
</dbReference>
<protein>
    <recommendedName>
        <fullName>Light-harvesting protein B800/850/890 beta-1 chain</fullName>
    </recommendedName>
    <alternativeName>
        <fullName>Antenna pigment protein beta-1 chain</fullName>
    </alternativeName>
    <alternativeName>
        <fullName>EHA-beta-1</fullName>
    </alternativeName>
</protein>
<comment type="function">
    <text>Antenna complexes are light-harvesting systems, which transfer the excitation energy to the reaction centers.</text>
</comment>
<comment type="subunit">
    <text>The core complex is formed by different alpha and beta chains, binding bacteriochlorophyll molecules, and arranged most probably in tetrameric structures disposed around the reaction center. The non-pigmented gamma chains may constitute additional components.</text>
</comment>
<comment type="subcellular location">
    <subcellularLocation>
        <location>Cell inner membrane</location>
        <topology>Single-pass type II membrane protein</topology>
    </subcellularLocation>
</comment>
<comment type="similarity">
    <text evidence="2">Belongs to the antenna complex beta subunit family.</text>
</comment>